<geneLocation type="chloroplast"/>
<evidence type="ECO:0000255" key="1">
    <source>
        <dbReference type="HAMAP-Rule" id="MF_01346"/>
    </source>
</evidence>
<evidence type="ECO:0000305" key="2"/>
<comment type="function">
    <text>Produces ATP from ADP in the presence of a proton gradient across the membrane. The alpha chain is a regulatory subunit.</text>
</comment>
<comment type="catalytic activity">
    <reaction evidence="1">
        <text>ATP + H2O + 4 H(+)(in) = ADP + phosphate + 5 H(+)(out)</text>
        <dbReference type="Rhea" id="RHEA:57720"/>
        <dbReference type="ChEBI" id="CHEBI:15377"/>
        <dbReference type="ChEBI" id="CHEBI:15378"/>
        <dbReference type="ChEBI" id="CHEBI:30616"/>
        <dbReference type="ChEBI" id="CHEBI:43474"/>
        <dbReference type="ChEBI" id="CHEBI:456216"/>
        <dbReference type="EC" id="7.1.2.2"/>
    </reaction>
</comment>
<comment type="subunit">
    <text evidence="1">F-type ATPases have 2 components, CF(1) - the catalytic core - and CF(0) - the membrane proton channel. CF(1) has five subunits: alpha(3), beta(3), gamma(1), delta(1), epsilon(1). CF(0) has four main subunits: a, b, b' and c.</text>
</comment>
<comment type="subcellular location">
    <subcellularLocation>
        <location evidence="1">Plastid</location>
        <location evidence="1">Chloroplast thylakoid membrane</location>
        <topology evidence="1">Peripheral membrane protein</topology>
    </subcellularLocation>
</comment>
<comment type="similarity">
    <text evidence="1">Belongs to the ATPase alpha/beta chains family.</text>
</comment>
<comment type="sequence caution" evidence="2">
    <conflict type="erroneous initiation">
        <sequence resource="EMBL-CDS" id="AAS46052"/>
    </conflict>
</comment>
<dbReference type="EC" id="7.1.2.2" evidence="1"/>
<dbReference type="EMBL" id="AY522329">
    <property type="protein sequence ID" value="AAS46052.1"/>
    <property type="status" value="ALT_INIT"/>
    <property type="molecule type" value="Genomic_DNA"/>
</dbReference>
<dbReference type="RefSeq" id="YP_009161361.1">
    <property type="nucleotide sequence ID" value="NC_027678.1"/>
</dbReference>
<dbReference type="RefSeq" id="YP_654212.2">
    <property type="nucleotide sequence ID" value="NC_008155.1"/>
</dbReference>
<dbReference type="SMR" id="P0C2Z5"/>
<dbReference type="STRING" id="39946.P0C2Z5"/>
<dbReference type="EnsemblPlants" id="OsLiXu_Ung0019590.01">
    <property type="protein sequence ID" value="OsLiXu_Ung0019590.01"/>
    <property type="gene ID" value="OsLiXu_Ung0019590"/>
</dbReference>
<dbReference type="EnsemblPlants" id="OsLiXu_Ung0020060.01">
    <property type="protein sequence ID" value="OsLiXu_Ung0020060.01"/>
    <property type="gene ID" value="OsLiXu_Ung0020060"/>
</dbReference>
<dbReference type="EnsemblPlants" id="OsMH63_01G018400_01">
    <property type="protein sequence ID" value="OsMH63_01G018400_01"/>
    <property type="gene ID" value="OsMH63_01G018400"/>
</dbReference>
<dbReference type="GeneID" id="4126882"/>
<dbReference type="Gramene" id="OsLiXu_Ung0019590.01">
    <property type="protein sequence ID" value="OsLiXu_Ung0019590.01"/>
    <property type="gene ID" value="OsLiXu_Ung0019590"/>
</dbReference>
<dbReference type="Gramene" id="OsLiXu_Ung0020060.01">
    <property type="protein sequence ID" value="OsLiXu_Ung0020060.01"/>
    <property type="gene ID" value="OsLiXu_Ung0020060"/>
</dbReference>
<dbReference type="Gramene" id="OsMH63_01G018400_01">
    <property type="protein sequence ID" value="OsMH63_01G018400_01"/>
    <property type="gene ID" value="OsMH63_01G018400"/>
</dbReference>
<dbReference type="Proteomes" id="UP000007015">
    <property type="component" value="Chloroplast"/>
</dbReference>
<dbReference type="GO" id="GO:0009535">
    <property type="term" value="C:chloroplast thylakoid membrane"/>
    <property type="evidence" value="ECO:0007669"/>
    <property type="project" value="UniProtKB-SubCell"/>
</dbReference>
<dbReference type="GO" id="GO:0009536">
    <property type="term" value="C:plastid"/>
    <property type="evidence" value="ECO:0000305"/>
    <property type="project" value="Gramene"/>
</dbReference>
<dbReference type="GO" id="GO:0045259">
    <property type="term" value="C:proton-transporting ATP synthase complex"/>
    <property type="evidence" value="ECO:0007669"/>
    <property type="project" value="UniProtKB-KW"/>
</dbReference>
<dbReference type="GO" id="GO:0043531">
    <property type="term" value="F:ADP binding"/>
    <property type="evidence" value="ECO:0007669"/>
    <property type="project" value="TreeGrafter"/>
</dbReference>
<dbReference type="GO" id="GO:0005524">
    <property type="term" value="F:ATP binding"/>
    <property type="evidence" value="ECO:0007669"/>
    <property type="project" value="UniProtKB-UniRule"/>
</dbReference>
<dbReference type="GO" id="GO:0046933">
    <property type="term" value="F:proton-transporting ATP synthase activity, rotational mechanism"/>
    <property type="evidence" value="ECO:0007669"/>
    <property type="project" value="UniProtKB-UniRule"/>
</dbReference>
<dbReference type="CDD" id="cd18113">
    <property type="entry name" value="ATP-synt_F1_alpha_C"/>
    <property type="match status" value="1"/>
</dbReference>
<dbReference type="CDD" id="cd18116">
    <property type="entry name" value="ATP-synt_F1_alpha_N"/>
    <property type="match status" value="1"/>
</dbReference>
<dbReference type="CDD" id="cd01132">
    <property type="entry name" value="F1-ATPase_alpha_CD"/>
    <property type="match status" value="1"/>
</dbReference>
<dbReference type="FunFam" id="1.20.150.20:FF:000001">
    <property type="entry name" value="ATP synthase subunit alpha"/>
    <property type="match status" value="1"/>
</dbReference>
<dbReference type="FunFam" id="2.40.30.20:FF:000001">
    <property type="entry name" value="ATP synthase subunit alpha"/>
    <property type="match status" value="1"/>
</dbReference>
<dbReference type="FunFam" id="3.40.50.300:FF:000002">
    <property type="entry name" value="ATP synthase subunit alpha"/>
    <property type="match status" value="1"/>
</dbReference>
<dbReference type="Gene3D" id="2.40.30.20">
    <property type="match status" value="1"/>
</dbReference>
<dbReference type="Gene3D" id="1.20.150.20">
    <property type="entry name" value="ATP synthase alpha/beta chain, C-terminal domain"/>
    <property type="match status" value="1"/>
</dbReference>
<dbReference type="Gene3D" id="3.40.50.300">
    <property type="entry name" value="P-loop containing nucleotide triphosphate hydrolases"/>
    <property type="match status" value="1"/>
</dbReference>
<dbReference type="HAMAP" id="MF_01346">
    <property type="entry name" value="ATP_synth_alpha_bact"/>
    <property type="match status" value="1"/>
</dbReference>
<dbReference type="InterPro" id="IPR023366">
    <property type="entry name" value="ATP_synth_asu-like_sf"/>
</dbReference>
<dbReference type="InterPro" id="IPR000793">
    <property type="entry name" value="ATP_synth_asu_C"/>
</dbReference>
<dbReference type="InterPro" id="IPR038376">
    <property type="entry name" value="ATP_synth_asu_C_sf"/>
</dbReference>
<dbReference type="InterPro" id="IPR033732">
    <property type="entry name" value="ATP_synth_F1_a_nt-bd_dom"/>
</dbReference>
<dbReference type="InterPro" id="IPR005294">
    <property type="entry name" value="ATP_synth_F1_asu"/>
</dbReference>
<dbReference type="InterPro" id="IPR020003">
    <property type="entry name" value="ATPase_a/bsu_AS"/>
</dbReference>
<dbReference type="InterPro" id="IPR004100">
    <property type="entry name" value="ATPase_F1/V1/A1_a/bsu_N"/>
</dbReference>
<dbReference type="InterPro" id="IPR036121">
    <property type="entry name" value="ATPase_F1/V1/A1_a/bsu_N_sf"/>
</dbReference>
<dbReference type="InterPro" id="IPR000194">
    <property type="entry name" value="ATPase_F1/V1/A1_a/bsu_nucl-bd"/>
</dbReference>
<dbReference type="InterPro" id="IPR027417">
    <property type="entry name" value="P-loop_NTPase"/>
</dbReference>
<dbReference type="NCBIfam" id="TIGR00962">
    <property type="entry name" value="atpA"/>
    <property type="match status" value="1"/>
</dbReference>
<dbReference type="NCBIfam" id="NF009884">
    <property type="entry name" value="PRK13343.1"/>
    <property type="match status" value="1"/>
</dbReference>
<dbReference type="PANTHER" id="PTHR48082:SF6">
    <property type="entry name" value="ATP SYNTHASE SUBUNIT ALPHA, CHLOROPLASTIC"/>
    <property type="match status" value="1"/>
</dbReference>
<dbReference type="PANTHER" id="PTHR48082">
    <property type="entry name" value="ATP SYNTHASE SUBUNIT ALPHA, MITOCHONDRIAL"/>
    <property type="match status" value="1"/>
</dbReference>
<dbReference type="Pfam" id="PF00006">
    <property type="entry name" value="ATP-synt_ab"/>
    <property type="match status" value="1"/>
</dbReference>
<dbReference type="Pfam" id="PF00306">
    <property type="entry name" value="ATP-synt_ab_C"/>
    <property type="match status" value="1"/>
</dbReference>
<dbReference type="Pfam" id="PF02874">
    <property type="entry name" value="ATP-synt_ab_N"/>
    <property type="match status" value="1"/>
</dbReference>
<dbReference type="PIRSF" id="PIRSF039088">
    <property type="entry name" value="F_ATPase_subunit_alpha"/>
    <property type="match status" value="1"/>
</dbReference>
<dbReference type="SUPFAM" id="SSF47917">
    <property type="entry name" value="C-terminal domain of alpha and beta subunits of F1 ATP synthase"/>
    <property type="match status" value="1"/>
</dbReference>
<dbReference type="SUPFAM" id="SSF50615">
    <property type="entry name" value="N-terminal domain of alpha and beta subunits of F1 ATP synthase"/>
    <property type="match status" value="1"/>
</dbReference>
<dbReference type="SUPFAM" id="SSF52540">
    <property type="entry name" value="P-loop containing nucleoside triphosphate hydrolases"/>
    <property type="match status" value="1"/>
</dbReference>
<dbReference type="PROSITE" id="PS00152">
    <property type="entry name" value="ATPASE_ALPHA_BETA"/>
    <property type="match status" value="1"/>
</dbReference>
<feature type="chain" id="PRO_0000288520" description="ATP synthase subunit alpha, chloroplastic">
    <location>
        <begin position="1"/>
        <end position="507"/>
    </location>
</feature>
<feature type="binding site" evidence="1">
    <location>
        <begin position="170"/>
        <end position="177"/>
    </location>
    <ligand>
        <name>ATP</name>
        <dbReference type="ChEBI" id="CHEBI:30616"/>
    </ligand>
</feature>
<feature type="site" description="Required for activity" evidence="1">
    <location>
        <position position="363"/>
    </location>
</feature>
<reference key="1">
    <citation type="journal article" date="2004" name="Plant Physiol.">
        <title>A comparison of rice chloroplast genomes.</title>
        <authorList>
            <person name="Tang J."/>
            <person name="Xia H."/>
            <person name="Cao M."/>
            <person name="Zhang X."/>
            <person name="Zeng W."/>
            <person name="Hu S."/>
            <person name="Tong W."/>
            <person name="Wang J."/>
            <person name="Wang J."/>
            <person name="Yu J."/>
            <person name="Yang H."/>
            <person name="Zhu L."/>
        </authorList>
    </citation>
    <scope>NUCLEOTIDE SEQUENCE [LARGE SCALE GENOMIC DNA]</scope>
    <source>
        <strain>cv. 93-11</strain>
    </source>
</reference>
<organism>
    <name type="scientific">Oryza sativa subsp. indica</name>
    <name type="common">Rice</name>
    <dbReference type="NCBI Taxonomy" id="39946"/>
    <lineage>
        <taxon>Eukaryota</taxon>
        <taxon>Viridiplantae</taxon>
        <taxon>Streptophyta</taxon>
        <taxon>Embryophyta</taxon>
        <taxon>Tracheophyta</taxon>
        <taxon>Spermatophyta</taxon>
        <taxon>Magnoliopsida</taxon>
        <taxon>Liliopsida</taxon>
        <taxon>Poales</taxon>
        <taxon>Poaceae</taxon>
        <taxon>BOP clade</taxon>
        <taxon>Oryzoideae</taxon>
        <taxon>Oryzeae</taxon>
        <taxon>Oryzinae</taxon>
        <taxon>Oryza</taxon>
        <taxon>Oryza sativa</taxon>
    </lineage>
</organism>
<name>ATPA_ORYSI</name>
<protein>
    <recommendedName>
        <fullName evidence="1">ATP synthase subunit alpha, chloroplastic</fullName>
        <ecNumber evidence="1">7.1.2.2</ecNumber>
    </recommendedName>
    <alternativeName>
        <fullName evidence="1">ATP synthase F1 sector subunit alpha</fullName>
    </alternativeName>
    <alternativeName>
        <fullName evidence="1">F-ATPase subunit alpha</fullName>
    </alternativeName>
</protein>
<accession>P0C2Z5</accession>
<accession>P12084</accession>
<accession>Q6QY13</accession>
<accession>Q6QY77</accession>
<keyword id="KW-0066">ATP synthesis</keyword>
<keyword id="KW-0067">ATP-binding</keyword>
<keyword id="KW-0139">CF(1)</keyword>
<keyword id="KW-0150">Chloroplast</keyword>
<keyword id="KW-0375">Hydrogen ion transport</keyword>
<keyword id="KW-0406">Ion transport</keyword>
<keyword id="KW-0472">Membrane</keyword>
<keyword id="KW-0547">Nucleotide-binding</keyword>
<keyword id="KW-0934">Plastid</keyword>
<keyword id="KW-1185">Reference proteome</keyword>
<keyword id="KW-0793">Thylakoid</keyword>
<keyword id="KW-1278">Translocase</keyword>
<keyword id="KW-0813">Transport</keyword>
<sequence>MATLRVDEIHKILRERIEQYNRKVGIENIGRVVQVGDGIARIIGLGEIMSGELVEFAEGTRGIALNLESKNVGIVLMGDGLMIQEGSFVKATGRIAQIPVSEAYLGRVINALAKPIDGRGEIVASESRLIESPAPGIISRRSVYEPLQTGLIAIDSMIPIGRGQRELIIGDRQTGKTAVATDTILNQKGQDVICVYVAIGQRASSVAQVVTTFHEEGAMEYTIVVAEMADSPATLQYLAPYTGAALAEYFMYRERHTLIIYDDLSKQAQAYRQMSLLLRRPPGREAYPGDVFYLHSRLLERAAKLNSLLGEGSMTALPIVETQSGDVSAYIPTNVISITDGQIFLSADLFNAGIRPAINVGISVSRVGSAAQIKAMKQVAGKSKLELAQFAELQAFAQFASALDKTSQNQLARGRRLRELLKQSQANPLPVEEQIATIYIGTRGYLDSLEIGQVKKFLDELRKHLKDTKPQFQEIISSSKTFTEEAEILLKEAIQEQLERFSLQEQT</sequence>
<gene>
    <name evidence="1" type="primary">atpA</name>
    <name type="ORF">9311044</name>
</gene>
<proteinExistence type="inferred from homology"/>